<keyword id="KW-0378">Hydrolase</keyword>
<keyword id="KW-0479">Metal-binding</keyword>
<keyword id="KW-0482">Metalloprotease</keyword>
<keyword id="KW-0645">Protease</keyword>
<keyword id="KW-1185">Reference proteome</keyword>
<keyword id="KW-0862">Zinc</keyword>
<organism>
    <name type="scientific">Acidovorax ebreus (strain TPSY)</name>
    <name type="common">Diaphorobacter sp. (strain TPSY)</name>
    <dbReference type="NCBI Taxonomy" id="535289"/>
    <lineage>
        <taxon>Bacteria</taxon>
        <taxon>Pseudomonadati</taxon>
        <taxon>Pseudomonadota</taxon>
        <taxon>Betaproteobacteria</taxon>
        <taxon>Burkholderiales</taxon>
        <taxon>Comamonadaceae</taxon>
        <taxon>Diaphorobacter</taxon>
    </lineage>
</organism>
<reference key="1">
    <citation type="submission" date="2009-01" db="EMBL/GenBank/DDBJ databases">
        <title>Complete sequence of Diaphorobacter sp. TPSY.</title>
        <authorList>
            <consortium name="US DOE Joint Genome Institute"/>
            <person name="Lucas S."/>
            <person name="Copeland A."/>
            <person name="Lapidus A."/>
            <person name="Glavina del Rio T."/>
            <person name="Tice H."/>
            <person name="Bruce D."/>
            <person name="Goodwin L."/>
            <person name="Pitluck S."/>
            <person name="Chertkov O."/>
            <person name="Brettin T."/>
            <person name="Detter J.C."/>
            <person name="Han C."/>
            <person name="Larimer F."/>
            <person name="Land M."/>
            <person name="Hauser L."/>
            <person name="Kyrpides N."/>
            <person name="Mikhailova N."/>
            <person name="Coates J.D."/>
        </authorList>
    </citation>
    <scope>NUCLEOTIDE SEQUENCE [LARGE SCALE GENOMIC DNA]</scope>
    <source>
        <strain>TPSY</strain>
    </source>
</reference>
<comment type="similarity">
    <text evidence="2">Belongs to the UPF0758 family.</text>
</comment>
<proteinExistence type="inferred from homology"/>
<gene>
    <name type="ordered locus">Dtpsy_2777</name>
</gene>
<feature type="chain" id="PRO_1000195294" description="UPF0758 protein Dtpsy_2777">
    <location>
        <begin position="1"/>
        <end position="238"/>
    </location>
</feature>
<feature type="domain" description="MPN" evidence="1">
    <location>
        <begin position="116"/>
        <end position="238"/>
    </location>
</feature>
<feature type="short sequence motif" description="JAMM motif" evidence="1">
    <location>
        <begin position="187"/>
        <end position="200"/>
    </location>
</feature>
<feature type="binding site" evidence="1">
    <location>
        <position position="187"/>
    </location>
    <ligand>
        <name>Zn(2+)</name>
        <dbReference type="ChEBI" id="CHEBI:29105"/>
        <note>catalytic</note>
    </ligand>
</feature>
<feature type="binding site" evidence="1">
    <location>
        <position position="189"/>
    </location>
    <ligand>
        <name>Zn(2+)</name>
        <dbReference type="ChEBI" id="CHEBI:29105"/>
        <note>catalytic</note>
    </ligand>
</feature>
<feature type="binding site" evidence="1">
    <location>
        <position position="200"/>
    </location>
    <ligand>
        <name>Zn(2+)</name>
        <dbReference type="ChEBI" id="CHEBI:29105"/>
        <note>catalytic</note>
    </ligand>
</feature>
<evidence type="ECO:0000255" key="1">
    <source>
        <dbReference type="PROSITE-ProRule" id="PRU01182"/>
    </source>
</evidence>
<evidence type="ECO:0000305" key="2"/>
<dbReference type="EMBL" id="CP001392">
    <property type="protein sequence ID" value="ACM34211.1"/>
    <property type="molecule type" value="Genomic_DNA"/>
</dbReference>
<dbReference type="SMR" id="B9MEH2"/>
<dbReference type="KEGG" id="dia:Dtpsy_2777"/>
<dbReference type="eggNOG" id="COG2003">
    <property type="taxonomic scope" value="Bacteria"/>
</dbReference>
<dbReference type="HOGENOM" id="CLU_073529_0_1_4"/>
<dbReference type="Proteomes" id="UP000000450">
    <property type="component" value="Chromosome"/>
</dbReference>
<dbReference type="GO" id="GO:0046872">
    <property type="term" value="F:metal ion binding"/>
    <property type="evidence" value="ECO:0007669"/>
    <property type="project" value="UniProtKB-KW"/>
</dbReference>
<dbReference type="GO" id="GO:0008237">
    <property type="term" value="F:metallopeptidase activity"/>
    <property type="evidence" value="ECO:0007669"/>
    <property type="project" value="UniProtKB-KW"/>
</dbReference>
<dbReference type="GO" id="GO:0006508">
    <property type="term" value="P:proteolysis"/>
    <property type="evidence" value="ECO:0007669"/>
    <property type="project" value="UniProtKB-KW"/>
</dbReference>
<dbReference type="CDD" id="cd08071">
    <property type="entry name" value="MPN_DUF2466"/>
    <property type="match status" value="1"/>
</dbReference>
<dbReference type="Gene3D" id="3.40.140.10">
    <property type="entry name" value="Cytidine Deaminase, domain 2"/>
    <property type="match status" value="1"/>
</dbReference>
<dbReference type="InterPro" id="IPR037518">
    <property type="entry name" value="MPN"/>
</dbReference>
<dbReference type="InterPro" id="IPR025657">
    <property type="entry name" value="RadC_JAB"/>
</dbReference>
<dbReference type="InterPro" id="IPR010994">
    <property type="entry name" value="RuvA_2-like"/>
</dbReference>
<dbReference type="InterPro" id="IPR001405">
    <property type="entry name" value="UPF0758"/>
</dbReference>
<dbReference type="InterPro" id="IPR020891">
    <property type="entry name" value="UPF0758_CS"/>
</dbReference>
<dbReference type="InterPro" id="IPR046778">
    <property type="entry name" value="UPF0758_N"/>
</dbReference>
<dbReference type="NCBIfam" id="NF000642">
    <property type="entry name" value="PRK00024.1"/>
    <property type="match status" value="1"/>
</dbReference>
<dbReference type="NCBIfam" id="TIGR00608">
    <property type="entry name" value="radc"/>
    <property type="match status" value="1"/>
</dbReference>
<dbReference type="PANTHER" id="PTHR30471">
    <property type="entry name" value="DNA REPAIR PROTEIN RADC"/>
    <property type="match status" value="1"/>
</dbReference>
<dbReference type="PANTHER" id="PTHR30471:SF3">
    <property type="entry name" value="UPF0758 PROTEIN YEES-RELATED"/>
    <property type="match status" value="1"/>
</dbReference>
<dbReference type="Pfam" id="PF04002">
    <property type="entry name" value="RadC"/>
    <property type="match status" value="1"/>
</dbReference>
<dbReference type="Pfam" id="PF20582">
    <property type="entry name" value="UPF0758_N"/>
    <property type="match status" value="1"/>
</dbReference>
<dbReference type="SUPFAM" id="SSF102712">
    <property type="entry name" value="JAB1/MPN domain"/>
    <property type="match status" value="1"/>
</dbReference>
<dbReference type="SUPFAM" id="SSF47781">
    <property type="entry name" value="RuvA domain 2-like"/>
    <property type="match status" value="1"/>
</dbReference>
<dbReference type="PROSITE" id="PS50249">
    <property type="entry name" value="MPN"/>
    <property type="match status" value="1"/>
</dbReference>
<dbReference type="PROSITE" id="PS01302">
    <property type="entry name" value="UPF0758"/>
    <property type="match status" value="1"/>
</dbReference>
<protein>
    <recommendedName>
        <fullName>UPF0758 protein Dtpsy_2777</fullName>
    </recommendedName>
</protein>
<accession>B9MEH2</accession>
<name>Y2777_ACIET</name>
<sequence length="238" mass="25433">MPLKDLPLDAQPREKLLARGPAALSDAELLAILLRTGLAGKGVLQLAQELLDDPVRDPATGRSAGGGFGGIAGLLHASSQDLQRIKGLGPAKRAELMAVLELARRAMAQQLREREVFDSPQAVQHYLQLHLAGRTHEVFAVLFLDSGNRLIAMEELFRGTLTQTSVYPREVVLRALHHHAAAVVLAHNHPSGSVQPSRADEALTQTLKAALALVDVRVLDHVIVAPGAALSMAEQGLV</sequence>